<proteinExistence type="evidence at protein level"/>
<reference key="1">
    <citation type="submission" date="2001-05" db="EMBL/GenBank/DDBJ databases">
        <title>b6f complex of Anabaena sp.</title>
        <authorList>
            <person name="Arnold M."/>
        </authorList>
    </citation>
    <scope>NUCLEOTIDE SEQUENCE [GENOMIC DNA]</scope>
</reference>
<reference key="2">
    <citation type="journal article" date="2001" name="DNA Res.">
        <title>Complete genomic sequence of the filamentous nitrogen-fixing cyanobacterium Anabaena sp. strain PCC 7120.</title>
        <authorList>
            <person name="Kaneko T."/>
            <person name="Nakamura Y."/>
            <person name="Wolk C.P."/>
            <person name="Kuritz T."/>
            <person name="Sasamoto S."/>
            <person name="Watanabe A."/>
            <person name="Iriguchi M."/>
            <person name="Ishikawa A."/>
            <person name="Kawashima K."/>
            <person name="Kimura T."/>
            <person name="Kishida Y."/>
            <person name="Kohara M."/>
            <person name="Matsumoto M."/>
            <person name="Matsuno A."/>
            <person name="Muraki A."/>
            <person name="Nakazaki N."/>
            <person name="Shimpo S."/>
            <person name="Sugimoto M."/>
            <person name="Takazawa M."/>
            <person name="Yamada M."/>
            <person name="Yasuda M."/>
            <person name="Tabata S."/>
        </authorList>
    </citation>
    <scope>NUCLEOTIDE SEQUENCE [LARGE SCALE GENOMIC DNA]</scope>
    <source>
        <strain>PCC 7120 / SAG 25.82 / UTEX 2576</strain>
    </source>
</reference>
<evidence type="ECO:0000255" key="1">
    <source>
        <dbReference type="HAMAP-Rule" id="MF_00633"/>
    </source>
</evidence>
<evidence type="ECO:0007829" key="2">
    <source>
        <dbReference type="PDB" id="2ZT9"/>
    </source>
</evidence>
<evidence type="ECO:0007829" key="3">
    <source>
        <dbReference type="PDB" id="4OGQ"/>
    </source>
</evidence>
<protein>
    <recommendedName>
        <fullName evidence="1">Cytochrome b6</fullName>
    </recommendedName>
</protein>
<name>CYB6_NOSS1</name>
<organism>
    <name type="scientific">Nostoc sp. (strain PCC 7120 / SAG 25.82 / UTEX 2576)</name>
    <dbReference type="NCBI Taxonomy" id="103690"/>
    <lineage>
        <taxon>Bacteria</taxon>
        <taxon>Bacillati</taxon>
        <taxon>Cyanobacteriota</taxon>
        <taxon>Cyanophyceae</taxon>
        <taxon>Nostocales</taxon>
        <taxon>Nostocaceae</taxon>
        <taxon>Nostoc</taxon>
    </lineage>
</organism>
<feature type="chain" id="PRO_0000061824" description="Cytochrome b6">
    <location>
        <begin position="1"/>
        <end position="215"/>
    </location>
</feature>
<feature type="transmembrane region" description="Helical" evidence="1">
    <location>
        <begin position="32"/>
        <end position="52"/>
    </location>
</feature>
<feature type="transmembrane region" description="Helical" evidence="1">
    <location>
        <begin position="90"/>
        <end position="110"/>
    </location>
</feature>
<feature type="transmembrane region" description="Helical" evidence="1">
    <location>
        <begin position="116"/>
        <end position="136"/>
    </location>
</feature>
<feature type="transmembrane region" description="Helical" evidence="1">
    <location>
        <begin position="186"/>
        <end position="206"/>
    </location>
</feature>
<feature type="binding site" description="covalent" evidence="1">
    <location>
        <position position="35"/>
    </location>
    <ligand>
        <name>heme c</name>
        <dbReference type="ChEBI" id="CHEBI:61717"/>
    </ligand>
</feature>
<feature type="binding site" description="axial binding residue" evidence="1">
    <location>
        <position position="86"/>
    </location>
    <ligand>
        <name>heme b</name>
        <dbReference type="ChEBI" id="CHEBI:60344"/>
        <label>2</label>
    </ligand>
    <ligandPart>
        <name>Fe</name>
        <dbReference type="ChEBI" id="CHEBI:18248"/>
    </ligandPart>
</feature>
<feature type="binding site" description="axial binding residue" evidence="1">
    <location>
        <position position="100"/>
    </location>
    <ligand>
        <name>heme b</name>
        <dbReference type="ChEBI" id="CHEBI:60344"/>
        <label>1</label>
    </ligand>
    <ligandPart>
        <name>Fe</name>
        <dbReference type="ChEBI" id="CHEBI:18248"/>
    </ligandPart>
</feature>
<feature type="binding site" description="axial binding residue" evidence="1">
    <location>
        <position position="187"/>
    </location>
    <ligand>
        <name>heme b</name>
        <dbReference type="ChEBI" id="CHEBI:60344"/>
        <label>2</label>
    </ligand>
    <ligandPart>
        <name>Fe</name>
        <dbReference type="ChEBI" id="CHEBI:18248"/>
    </ligandPart>
</feature>
<feature type="binding site" description="axial binding residue" evidence="1">
    <location>
        <position position="202"/>
    </location>
    <ligand>
        <name>heme b</name>
        <dbReference type="ChEBI" id="CHEBI:60344"/>
        <label>1</label>
    </ligand>
    <ligandPart>
        <name>Fe</name>
        <dbReference type="ChEBI" id="CHEBI:18248"/>
    </ligandPart>
</feature>
<feature type="helix" evidence="3">
    <location>
        <begin position="4"/>
        <end position="12"/>
    </location>
</feature>
<feature type="helix" evidence="3">
    <location>
        <begin position="14"/>
        <end position="21"/>
    </location>
</feature>
<feature type="helix" evidence="3">
    <location>
        <begin position="32"/>
        <end position="35"/>
    </location>
</feature>
<feature type="helix" evidence="3">
    <location>
        <begin position="36"/>
        <end position="54"/>
    </location>
</feature>
<feature type="turn" evidence="3">
    <location>
        <begin position="55"/>
        <end position="57"/>
    </location>
</feature>
<feature type="turn" evidence="3">
    <location>
        <begin position="62"/>
        <end position="64"/>
    </location>
</feature>
<feature type="helix" evidence="3">
    <location>
        <begin position="65"/>
        <end position="74"/>
    </location>
</feature>
<feature type="helix" evidence="3">
    <location>
        <begin position="79"/>
        <end position="106"/>
    </location>
</feature>
<feature type="turn" evidence="3">
    <location>
        <begin position="107"/>
        <end position="110"/>
    </location>
</feature>
<feature type="helix" evidence="2">
    <location>
        <begin position="112"/>
        <end position="114"/>
    </location>
</feature>
<feature type="helix" evidence="3">
    <location>
        <begin position="115"/>
        <end position="136"/>
    </location>
</feature>
<feature type="turn" evidence="3">
    <location>
        <begin position="137"/>
        <end position="139"/>
    </location>
</feature>
<feature type="helix" evidence="3">
    <location>
        <begin position="142"/>
        <end position="149"/>
    </location>
</feature>
<feature type="turn" evidence="3">
    <location>
        <begin position="150"/>
        <end position="153"/>
    </location>
</feature>
<feature type="helix" evidence="3">
    <location>
        <begin position="154"/>
        <end position="157"/>
    </location>
</feature>
<feature type="turn" evidence="3">
    <location>
        <begin position="159"/>
        <end position="161"/>
    </location>
</feature>
<feature type="helix" evidence="3">
    <location>
        <begin position="162"/>
        <end position="170"/>
    </location>
</feature>
<feature type="strand" evidence="3">
    <location>
        <begin position="172"/>
        <end position="174"/>
    </location>
</feature>
<feature type="helix" evidence="3">
    <location>
        <begin position="177"/>
        <end position="188"/>
    </location>
</feature>
<feature type="helix" evidence="3">
    <location>
        <begin position="190"/>
        <end position="209"/>
    </location>
</feature>
<accession>P0A384</accession>
<accession>Q9L3Q1</accession>
<sequence length="215" mass="24273">MANVYDWFEERLEIQAIAEDVTSKYVPPHVNIFYCLGGITLVCFLIQFATGFAMTFYYKPTVAEAYSSVQYIMNEVNFGWLIRSIHRWSASMMVLMMILHVFRVYLTGGFKKPRELTWVSGVILAVITVSFGVTGYSLPWDQVGYWAVKIVSGVPEAIPVVGVLISDLLRGGSSVGQATLTRYYSAHTFVLPWLIAVFMLFHFLMIRKQGISGPL</sequence>
<comment type="function">
    <text evidence="1">Component of the cytochrome b6-f complex, which mediates electron transfer between photosystem II (PSII) and photosystem I (PSI), cyclic electron flow around PSI, and state transitions.</text>
</comment>
<comment type="cofactor">
    <cofactor evidence="1">
        <name>heme b</name>
        <dbReference type="ChEBI" id="CHEBI:60344"/>
    </cofactor>
    <text evidence="1">Binds 2 heme b groups non-covalently with two histidine residues as axial ligands.</text>
</comment>
<comment type="cofactor">
    <cofactor evidence="1">
        <name>heme c</name>
        <dbReference type="ChEBI" id="CHEBI:61717"/>
    </cofactor>
    <text evidence="1">Binds one heme group covalently by a single cysteine link with no axial amino acid ligand. This heme was named heme ci.</text>
</comment>
<comment type="subunit">
    <text evidence="1">The 4 large subunits of the cytochrome b6-f complex are cytochrome b6, subunit IV (17 kDa polypeptide, PetD), cytochrome f and the Rieske protein, while the 4 small subunits are PetG, PetL, PetM and PetN. The complex functions as a dimer.</text>
</comment>
<comment type="subcellular location">
    <subcellularLocation>
        <location evidence="1">Cellular thylakoid membrane</location>
        <topology evidence="1">Multi-pass membrane protein</topology>
    </subcellularLocation>
</comment>
<comment type="miscellaneous">
    <text evidence="1">Heme 1 (or BH or b566) is high-potential and absorbs at about 566 nm, and heme 2 (or BL or b562) is low-potential and absorbs at about 562 nm.</text>
</comment>
<comment type="similarity">
    <text evidence="1">Belongs to the cytochrome b family. PetB subfamily.</text>
</comment>
<dbReference type="EMBL" id="AJ319645">
    <property type="protein sequence ID" value="CAC39602.1"/>
    <property type="molecule type" value="Genomic_DNA"/>
</dbReference>
<dbReference type="EMBL" id="BA000019">
    <property type="protein sequence ID" value="BAB75120.1"/>
    <property type="molecule type" value="Genomic_DNA"/>
</dbReference>
<dbReference type="PIR" id="AF2233">
    <property type="entry name" value="AF2233"/>
</dbReference>
<dbReference type="RefSeq" id="WP_010997571.1">
    <property type="nucleotide sequence ID" value="NZ_RSCN01000015.1"/>
</dbReference>
<dbReference type="PDB" id="2ZT9">
    <property type="method" value="X-ray"/>
    <property type="resolution" value="3.00 A"/>
    <property type="chains" value="A=1-215"/>
</dbReference>
<dbReference type="PDB" id="4H44">
    <property type="method" value="X-ray"/>
    <property type="resolution" value="2.70 A"/>
    <property type="chains" value="A=1-215"/>
</dbReference>
<dbReference type="PDB" id="4OGQ">
    <property type="method" value="X-ray"/>
    <property type="resolution" value="2.50 A"/>
    <property type="chains" value="A=1-215"/>
</dbReference>
<dbReference type="PDBsum" id="2ZT9"/>
<dbReference type="PDBsum" id="4H44"/>
<dbReference type="PDBsum" id="4OGQ"/>
<dbReference type="SMR" id="P0A384"/>
<dbReference type="DIP" id="DIP-61000N"/>
<dbReference type="IntAct" id="P0A384">
    <property type="interactions" value="7"/>
</dbReference>
<dbReference type="STRING" id="103690.gene:10495460"/>
<dbReference type="TCDB" id="3.D.3.5.6">
    <property type="family name" value="the proton-translocating quinol:cytochrome c reductase (qcr) superfamily"/>
</dbReference>
<dbReference type="GeneID" id="58726228"/>
<dbReference type="KEGG" id="ana:alr3421"/>
<dbReference type="eggNOG" id="COG1290">
    <property type="taxonomic scope" value="Bacteria"/>
</dbReference>
<dbReference type="OrthoDB" id="9804503at2"/>
<dbReference type="EvolutionaryTrace" id="P0A384"/>
<dbReference type="Proteomes" id="UP000002483">
    <property type="component" value="Chromosome"/>
</dbReference>
<dbReference type="GO" id="GO:0031676">
    <property type="term" value="C:plasma membrane-derived thylakoid membrane"/>
    <property type="evidence" value="ECO:0007669"/>
    <property type="project" value="UniProtKB-SubCell"/>
</dbReference>
<dbReference type="GO" id="GO:0045158">
    <property type="term" value="F:electron transporter, transferring electrons within cytochrome b6/f complex of photosystem II activity"/>
    <property type="evidence" value="ECO:0007669"/>
    <property type="project" value="UniProtKB-UniRule"/>
</dbReference>
<dbReference type="GO" id="GO:0046872">
    <property type="term" value="F:metal ion binding"/>
    <property type="evidence" value="ECO:0007669"/>
    <property type="project" value="UniProtKB-KW"/>
</dbReference>
<dbReference type="GO" id="GO:0016491">
    <property type="term" value="F:oxidoreductase activity"/>
    <property type="evidence" value="ECO:0007669"/>
    <property type="project" value="InterPro"/>
</dbReference>
<dbReference type="GO" id="GO:0015979">
    <property type="term" value="P:photosynthesis"/>
    <property type="evidence" value="ECO:0007669"/>
    <property type="project" value="UniProtKB-UniRule"/>
</dbReference>
<dbReference type="GO" id="GO:0022904">
    <property type="term" value="P:respiratory electron transport chain"/>
    <property type="evidence" value="ECO:0007669"/>
    <property type="project" value="InterPro"/>
</dbReference>
<dbReference type="CDD" id="cd00284">
    <property type="entry name" value="Cytochrome_b_N"/>
    <property type="match status" value="1"/>
</dbReference>
<dbReference type="FunFam" id="1.20.810.10:FF:000001">
    <property type="entry name" value="Cytochrome b6"/>
    <property type="match status" value="1"/>
</dbReference>
<dbReference type="Gene3D" id="1.20.810.10">
    <property type="entry name" value="Cytochrome Bc1 Complex, Chain C"/>
    <property type="match status" value="1"/>
</dbReference>
<dbReference type="HAMAP" id="MF_00633">
    <property type="entry name" value="Cytb6_f_cytb6"/>
    <property type="match status" value="1"/>
</dbReference>
<dbReference type="InterPro" id="IPR005797">
    <property type="entry name" value="Cyt_b/b6_N"/>
</dbReference>
<dbReference type="InterPro" id="IPR023530">
    <property type="entry name" value="Cyt_B6_PetB"/>
</dbReference>
<dbReference type="InterPro" id="IPR027387">
    <property type="entry name" value="Cytb/b6-like_sf"/>
</dbReference>
<dbReference type="InterPro" id="IPR048259">
    <property type="entry name" value="Cytochrome_b_N_euk/bac"/>
</dbReference>
<dbReference type="InterPro" id="IPR016174">
    <property type="entry name" value="Di-haem_cyt_TM"/>
</dbReference>
<dbReference type="NCBIfam" id="NF002990">
    <property type="entry name" value="PRK03735.1"/>
    <property type="match status" value="1"/>
</dbReference>
<dbReference type="PANTHER" id="PTHR19271">
    <property type="entry name" value="CYTOCHROME B"/>
    <property type="match status" value="1"/>
</dbReference>
<dbReference type="PANTHER" id="PTHR19271:SF16">
    <property type="entry name" value="CYTOCHROME B"/>
    <property type="match status" value="1"/>
</dbReference>
<dbReference type="Pfam" id="PF00033">
    <property type="entry name" value="Cytochrome_B"/>
    <property type="match status" value="1"/>
</dbReference>
<dbReference type="PIRSF" id="PIRSF000032">
    <property type="entry name" value="Cytochrome_b6"/>
    <property type="match status" value="1"/>
</dbReference>
<dbReference type="SUPFAM" id="SSF81342">
    <property type="entry name" value="Transmembrane di-heme cytochromes"/>
    <property type="match status" value="1"/>
</dbReference>
<dbReference type="PROSITE" id="PS51002">
    <property type="entry name" value="CYTB_NTER"/>
    <property type="match status" value="1"/>
</dbReference>
<gene>
    <name evidence="1" type="primary">petB</name>
    <name type="ordered locus">alr3421</name>
</gene>
<keyword id="KW-0002">3D-structure</keyword>
<keyword id="KW-0249">Electron transport</keyword>
<keyword id="KW-0349">Heme</keyword>
<keyword id="KW-0408">Iron</keyword>
<keyword id="KW-0472">Membrane</keyword>
<keyword id="KW-0479">Metal-binding</keyword>
<keyword id="KW-0602">Photosynthesis</keyword>
<keyword id="KW-1185">Reference proteome</keyword>
<keyword id="KW-0793">Thylakoid</keyword>
<keyword id="KW-0812">Transmembrane</keyword>
<keyword id="KW-1133">Transmembrane helix</keyword>
<keyword id="KW-0813">Transport</keyword>